<keyword id="KW-0963">Cytoplasm</keyword>
<keyword id="KW-0251">Elongation factor</keyword>
<keyword id="KW-0342">GTP-binding</keyword>
<keyword id="KW-0547">Nucleotide-binding</keyword>
<keyword id="KW-0648">Protein biosynthesis</keyword>
<keyword id="KW-1185">Reference proteome</keyword>
<comment type="function">
    <text evidence="1">Catalyzes the GTP-dependent ribosomal translocation step during translation elongation. During this step, the ribosome changes from the pre-translocational (PRE) to the post-translocational (POST) state as the newly formed A-site-bound peptidyl-tRNA and P-site-bound deacylated tRNA move to the P and E sites, respectively. Catalyzes the coordinated movement of the two tRNA molecules, the mRNA and conformational changes in the ribosome.</text>
</comment>
<comment type="subcellular location">
    <subcellularLocation>
        <location evidence="1">Cytoplasm</location>
    </subcellularLocation>
</comment>
<comment type="similarity">
    <text evidence="1">Belongs to the TRAFAC class translation factor GTPase superfamily. Classic translation factor GTPase family. EF-G/EF-2 subfamily.</text>
</comment>
<gene>
    <name evidence="1" type="primary">fusA</name>
    <name type="ordered locus">HAPS_1968</name>
</gene>
<dbReference type="EMBL" id="CP001321">
    <property type="protein sequence ID" value="ACL33446.1"/>
    <property type="molecule type" value="Genomic_DNA"/>
</dbReference>
<dbReference type="RefSeq" id="WP_015940005.1">
    <property type="nucleotide sequence ID" value="NC_011852.1"/>
</dbReference>
<dbReference type="SMR" id="B8F7Z4"/>
<dbReference type="STRING" id="557723.HAPS_1968"/>
<dbReference type="KEGG" id="hap:HAPS_1968"/>
<dbReference type="PATRIC" id="fig|557723.8.peg.1954"/>
<dbReference type="HOGENOM" id="CLU_002794_4_1_6"/>
<dbReference type="Proteomes" id="UP000006743">
    <property type="component" value="Chromosome"/>
</dbReference>
<dbReference type="GO" id="GO:0005737">
    <property type="term" value="C:cytoplasm"/>
    <property type="evidence" value="ECO:0007669"/>
    <property type="project" value="UniProtKB-SubCell"/>
</dbReference>
<dbReference type="GO" id="GO:0005525">
    <property type="term" value="F:GTP binding"/>
    <property type="evidence" value="ECO:0007669"/>
    <property type="project" value="UniProtKB-UniRule"/>
</dbReference>
<dbReference type="GO" id="GO:0003924">
    <property type="term" value="F:GTPase activity"/>
    <property type="evidence" value="ECO:0007669"/>
    <property type="project" value="InterPro"/>
</dbReference>
<dbReference type="GO" id="GO:0097216">
    <property type="term" value="F:guanosine tetraphosphate binding"/>
    <property type="evidence" value="ECO:0007669"/>
    <property type="project" value="UniProtKB-ARBA"/>
</dbReference>
<dbReference type="GO" id="GO:0003746">
    <property type="term" value="F:translation elongation factor activity"/>
    <property type="evidence" value="ECO:0007669"/>
    <property type="project" value="UniProtKB-UniRule"/>
</dbReference>
<dbReference type="GO" id="GO:0032790">
    <property type="term" value="P:ribosome disassembly"/>
    <property type="evidence" value="ECO:0007669"/>
    <property type="project" value="TreeGrafter"/>
</dbReference>
<dbReference type="CDD" id="cd01886">
    <property type="entry name" value="EF-G"/>
    <property type="match status" value="1"/>
</dbReference>
<dbReference type="CDD" id="cd16262">
    <property type="entry name" value="EFG_III"/>
    <property type="match status" value="1"/>
</dbReference>
<dbReference type="CDD" id="cd01434">
    <property type="entry name" value="EFG_mtEFG1_IV"/>
    <property type="match status" value="1"/>
</dbReference>
<dbReference type="CDD" id="cd03713">
    <property type="entry name" value="EFG_mtEFG_C"/>
    <property type="match status" value="1"/>
</dbReference>
<dbReference type="CDD" id="cd04088">
    <property type="entry name" value="EFG_mtEFG_II"/>
    <property type="match status" value="1"/>
</dbReference>
<dbReference type="FunFam" id="2.40.30.10:FF:000006">
    <property type="entry name" value="Elongation factor G"/>
    <property type="match status" value="1"/>
</dbReference>
<dbReference type="FunFam" id="3.30.230.10:FF:000003">
    <property type="entry name" value="Elongation factor G"/>
    <property type="match status" value="1"/>
</dbReference>
<dbReference type="FunFam" id="3.30.70.240:FF:000001">
    <property type="entry name" value="Elongation factor G"/>
    <property type="match status" value="1"/>
</dbReference>
<dbReference type="FunFam" id="3.30.70.870:FF:000001">
    <property type="entry name" value="Elongation factor G"/>
    <property type="match status" value="1"/>
</dbReference>
<dbReference type="FunFam" id="3.40.50.300:FF:000029">
    <property type="entry name" value="Elongation factor G"/>
    <property type="match status" value="1"/>
</dbReference>
<dbReference type="Gene3D" id="3.30.230.10">
    <property type="match status" value="1"/>
</dbReference>
<dbReference type="Gene3D" id="3.30.70.240">
    <property type="match status" value="1"/>
</dbReference>
<dbReference type="Gene3D" id="3.30.70.870">
    <property type="entry name" value="Elongation Factor G (Translational Gtpase), domain 3"/>
    <property type="match status" value="1"/>
</dbReference>
<dbReference type="Gene3D" id="3.40.50.300">
    <property type="entry name" value="P-loop containing nucleotide triphosphate hydrolases"/>
    <property type="match status" value="1"/>
</dbReference>
<dbReference type="Gene3D" id="2.40.30.10">
    <property type="entry name" value="Translation factors"/>
    <property type="match status" value="1"/>
</dbReference>
<dbReference type="HAMAP" id="MF_00054_B">
    <property type="entry name" value="EF_G_EF_2_B"/>
    <property type="match status" value="1"/>
</dbReference>
<dbReference type="InterPro" id="IPR041095">
    <property type="entry name" value="EFG_II"/>
</dbReference>
<dbReference type="InterPro" id="IPR009022">
    <property type="entry name" value="EFG_III"/>
</dbReference>
<dbReference type="InterPro" id="IPR035647">
    <property type="entry name" value="EFG_III/V"/>
</dbReference>
<dbReference type="InterPro" id="IPR047872">
    <property type="entry name" value="EFG_IV"/>
</dbReference>
<dbReference type="InterPro" id="IPR035649">
    <property type="entry name" value="EFG_V"/>
</dbReference>
<dbReference type="InterPro" id="IPR000640">
    <property type="entry name" value="EFG_V-like"/>
</dbReference>
<dbReference type="InterPro" id="IPR004161">
    <property type="entry name" value="EFTu-like_2"/>
</dbReference>
<dbReference type="InterPro" id="IPR031157">
    <property type="entry name" value="G_TR_CS"/>
</dbReference>
<dbReference type="InterPro" id="IPR027417">
    <property type="entry name" value="P-loop_NTPase"/>
</dbReference>
<dbReference type="InterPro" id="IPR020568">
    <property type="entry name" value="Ribosomal_Su5_D2-typ_SF"/>
</dbReference>
<dbReference type="InterPro" id="IPR014721">
    <property type="entry name" value="Ribsml_uS5_D2-typ_fold_subgr"/>
</dbReference>
<dbReference type="InterPro" id="IPR005225">
    <property type="entry name" value="Small_GTP-bd"/>
</dbReference>
<dbReference type="InterPro" id="IPR000795">
    <property type="entry name" value="T_Tr_GTP-bd_dom"/>
</dbReference>
<dbReference type="InterPro" id="IPR009000">
    <property type="entry name" value="Transl_B-barrel_sf"/>
</dbReference>
<dbReference type="InterPro" id="IPR004540">
    <property type="entry name" value="Transl_elong_EFG/EF2"/>
</dbReference>
<dbReference type="InterPro" id="IPR005517">
    <property type="entry name" value="Transl_elong_EFG/EF2_IV"/>
</dbReference>
<dbReference type="NCBIfam" id="TIGR00484">
    <property type="entry name" value="EF-G"/>
    <property type="match status" value="1"/>
</dbReference>
<dbReference type="NCBIfam" id="NF009381">
    <property type="entry name" value="PRK12740.1-5"/>
    <property type="match status" value="1"/>
</dbReference>
<dbReference type="NCBIfam" id="TIGR00231">
    <property type="entry name" value="small_GTP"/>
    <property type="match status" value="1"/>
</dbReference>
<dbReference type="PANTHER" id="PTHR43261:SF1">
    <property type="entry name" value="RIBOSOME-RELEASING FACTOR 2, MITOCHONDRIAL"/>
    <property type="match status" value="1"/>
</dbReference>
<dbReference type="PANTHER" id="PTHR43261">
    <property type="entry name" value="TRANSLATION ELONGATION FACTOR G-RELATED"/>
    <property type="match status" value="1"/>
</dbReference>
<dbReference type="Pfam" id="PF00679">
    <property type="entry name" value="EFG_C"/>
    <property type="match status" value="1"/>
</dbReference>
<dbReference type="Pfam" id="PF14492">
    <property type="entry name" value="EFG_III"/>
    <property type="match status" value="1"/>
</dbReference>
<dbReference type="Pfam" id="PF03764">
    <property type="entry name" value="EFG_IV"/>
    <property type="match status" value="1"/>
</dbReference>
<dbReference type="Pfam" id="PF00009">
    <property type="entry name" value="GTP_EFTU"/>
    <property type="match status" value="1"/>
</dbReference>
<dbReference type="Pfam" id="PF03144">
    <property type="entry name" value="GTP_EFTU_D2"/>
    <property type="match status" value="1"/>
</dbReference>
<dbReference type="PRINTS" id="PR00315">
    <property type="entry name" value="ELONGATNFCT"/>
</dbReference>
<dbReference type="SMART" id="SM00838">
    <property type="entry name" value="EFG_C"/>
    <property type="match status" value="1"/>
</dbReference>
<dbReference type="SMART" id="SM00889">
    <property type="entry name" value="EFG_IV"/>
    <property type="match status" value="1"/>
</dbReference>
<dbReference type="SUPFAM" id="SSF54980">
    <property type="entry name" value="EF-G C-terminal domain-like"/>
    <property type="match status" value="2"/>
</dbReference>
<dbReference type="SUPFAM" id="SSF52540">
    <property type="entry name" value="P-loop containing nucleoside triphosphate hydrolases"/>
    <property type="match status" value="1"/>
</dbReference>
<dbReference type="SUPFAM" id="SSF54211">
    <property type="entry name" value="Ribosomal protein S5 domain 2-like"/>
    <property type="match status" value="1"/>
</dbReference>
<dbReference type="SUPFAM" id="SSF50447">
    <property type="entry name" value="Translation proteins"/>
    <property type="match status" value="1"/>
</dbReference>
<dbReference type="PROSITE" id="PS00301">
    <property type="entry name" value="G_TR_1"/>
    <property type="match status" value="1"/>
</dbReference>
<dbReference type="PROSITE" id="PS51722">
    <property type="entry name" value="G_TR_2"/>
    <property type="match status" value="1"/>
</dbReference>
<organism>
    <name type="scientific">Glaesserella parasuis serovar 5 (strain SH0165)</name>
    <name type="common">Haemophilus parasuis</name>
    <dbReference type="NCBI Taxonomy" id="557723"/>
    <lineage>
        <taxon>Bacteria</taxon>
        <taxon>Pseudomonadati</taxon>
        <taxon>Pseudomonadota</taxon>
        <taxon>Gammaproteobacteria</taxon>
        <taxon>Pasteurellales</taxon>
        <taxon>Pasteurellaceae</taxon>
        <taxon>Glaesserella</taxon>
    </lineage>
</organism>
<evidence type="ECO:0000255" key="1">
    <source>
        <dbReference type="HAMAP-Rule" id="MF_00054"/>
    </source>
</evidence>
<reference key="1">
    <citation type="journal article" date="2009" name="J. Bacteriol.">
        <title>Complete genome sequence of Haemophilus parasuis SH0165.</title>
        <authorList>
            <person name="Yue M."/>
            <person name="Yang F."/>
            <person name="Yang J."/>
            <person name="Bei W."/>
            <person name="Cai X."/>
            <person name="Chen L."/>
            <person name="Dong J."/>
            <person name="Zhou R."/>
            <person name="Jin M."/>
            <person name="Jin Q."/>
            <person name="Chen H."/>
        </authorList>
    </citation>
    <scope>NUCLEOTIDE SEQUENCE [LARGE SCALE GENOMIC DNA]</scope>
    <source>
        <strain>SH0165</strain>
    </source>
</reference>
<name>EFG_GLAP5</name>
<proteinExistence type="inferred from homology"/>
<feature type="chain" id="PRO_1000201466" description="Elongation factor G">
    <location>
        <begin position="1"/>
        <end position="700"/>
    </location>
</feature>
<feature type="domain" description="tr-type G">
    <location>
        <begin position="8"/>
        <end position="290"/>
    </location>
</feature>
<feature type="binding site" evidence="1">
    <location>
        <begin position="17"/>
        <end position="24"/>
    </location>
    <ligand>
        <name>GTP</name>
        <dbReference type="ChEBI" id="CHEBI:37565"/>
    </ligand>
</feature>
<feature type="binding site" evidence="1">
    <location>
        <begin position="88"/>
        <end position="92"/>
    </location>
    <ligand>
        <name>GTP</name>
        <dbReference type="ChEBI" id="CHEBI:37565"/>
    </ligand>
</feature>
<feature type="binding site" evidence="1">
    <location>
        <begin position="142"/>
        <end position="145"/>
    </location>
    <ligand>
        <name>GTP</name>
        <dbReference type="ChEBI" id="CHEBI:37565"/>
    </ligand>
</feature>
<accession>B8F7Z4</accession>
<protein>
    <recommendedName>
        <fullName evidence="1">Elongation factor G</fullName>
        <shortName evidence="1">EF-G</shortName>
    </recommendedName>
</protein>
<sequence>MARTTPIERYRNIGISAHIDAGKTTTSERILFYTGVSHKIGEVHDGAATMDWMEQEQERGITITSAATTAFWSGMSQQYPQHRINVIDTPGHVDFTIEVERSMRVLDGAVMVYCAVGGVQPQSETVWRQANKYKVPRIAFVNKMDRTGANFLRVVEQIKTRLGGNSVPLQLPIGAEENFTGVVDLIKMKAINWNEADQGMTFTYEDVPANMLAECEEWRNNLVEAAAEASEELMEKFFAGEELTEEEIKTALRQRVLSGEVIPVCCGSAFKNKGVQAMLDAVIDYLPAPTDIPAIEGINEDGTPGERHASDDEPFSSLAFKIATDPFVGNLTFFRVYSGVINSGDTVYNSVKQKRERFGRIVQMHANKRDEIKEVRAGDIAAAIGLKDVGTGDTLCAQEAPIILERMEFPEPVISVAVEPKTKADQEKMGLALGRLAQEDPSFRVHTDEESGETIISGMGELHLDIIVDRMKREFKVEANIGKPQVSYRETIRTRVNDVEGKHAKQSGGRGQYGHVVIDLYPLDPEGPGYEFVNEIKGGVIPGEYIPAVDKGIQEQLKSGPLAGYPVVDLGVRLHFGSYHDVDSSELAFKLAASLAFKAAFAKANPVLLEPIMKVEVETPPDYVGDVIGDLSRRRAMVNGQEANEFVVKINAEVPLSEMFGYATDLRSQTQGRASYSMEPLKYAEAPTSVAAAVIEARKK</sequence>